<proteinExistence type="inferred from homology"/>
<dbReference type="EC" id="4.1.1.23" evidence="1"/>
<dbReference type="EMBL" id="CP000514">
    <property type="protein sequence ID" value="ABM18123.1"/>
    <property type="molecule type" value="Genomic_DNA"/>
</dbReference>
<dbReference type="RefSeq" id="WP_011784541.1">
    <property type="nucleotide sequence ID" value="NC_008740.1"/>
</dbReference>
<dbReference type="SMR" id="A1TZF4"/>
<dbReference type="STRING" id="351348.Maqu_1031"/>
<dbReference type="KEGG" id="maq:Maqu_1031"/>
<dbReference type="eggNOG" id="COG0284">
    <property type="taxonomic scope" value="Bacteria"/>
</dbReference>
<dbReference type="HOGENOM" id="CLU_067069_0_0_6"/>
<dbReference type="OrthoDB" id="9806203at2"/>
<dbReference type="UniPathway" id="UPA00070">
    <property type="reaction ID" value="UER00120"/>
</dbReference>
<dbReference type="Proteomes" id="UP000000998">
    <property type="component" value="Chromosome"/>
</dbReference>
<dbReference type="GO" id="GO:0005829">
    <property type="term" value="C:cytosol"/>
    <property type="evidence" value="ECO:0007669"/>
    <property type="project" value="TreeGrafter"/>
</dbReference>
<dbReference type="GO" id="GO:0004590">
    <property type="term" value="F:orotidine-5'-phosphate decarboxylase activity"/>
    <property type="evidence" value="ECO:0007669"/>
    <property type="project" value="UniProtKB-UniRule"/>
</dbReference>
<dbReference type="GO" id="GO:0006207">
    <property type="term" value="P:'de novo' pyrimidine nucleobase biosynthetic process"/>
    <property type="evidence" value="ECO:0007669"/>
    <property type="project" value="InterPro"/>
</dbReference>
<dbReference type="GO" id="GO:0044205">
    <property type="term" value="P:'de novo' UMP biosynthetic process"/>
    <property type="evidence" value="ECO:0007669"/>
    <property type="project" value="UniProtKB-UniRule"/>
</dbReference>
<dbReference type="CDD" id="cd04725">
    <property type="entry name" value="OMP_decarboxylase_like"/>
    <property type="match status" value="1"/>
</dbReference>
<dbReference type="FunFam" id="3.20.20.70:FF:000015">
    <property type="entry name" value="Orotidine 5'-phosphate decarboxylase"/>
    <property type="match status" value="1"/>
</dbReference>
<dbReference type="Gene3D" id="3.20.20.70">
    <property type="entry name" value="Aldolase class I"/>
    <property type="match status" value="1"/>
</dbReference>
<dbReference type="HAMAP" id="MF_01200_B">
    <property type="entry name" value="OMPdecase_type1_B"/>
    <property type="match status" value="1"/>
</dbReference>
<dbReference type="InterPro" id="IPR013785">
    <property type="entry name" value="Aldolase_TIM"/>
</dbReference>
<dbReference type="InterPro" id="IPR014732">
    <property type="entry name" value="OMPdecase"/>
</dbReference>
<dbReference type="InterPro" id="IPR018089">
    <property type="entry name" value="OMPdecase_AS"/>
</dbReference>
<dbReference type="InterPro" id="IPR047596">
    <property type="entry name" value="OMPdecase_bac"/>
</dbReference>
<dbReference type="InterPro" id="IPR001754">
    <property type="entry name" value="OMPdeCOase_dom"/>
</dbReference>
<dbReference type="InterPro" id="IPR011060">
    <property type="entry name" value="RibuloseP-bd_barrel"/>
</dbReference>
<dbReference type="NCBIfam" id="NF001273">
    <property type="entry name" value="PRK00230.1"/>
    <property type="match status" value="1"/>
</dbReference>
<dbReference type="NCBIfam" id="TIGR01740">
    <property type="entry name" value="pyrF"/>
    <property type="match status" value="1"/>
</dbReference>
<dbReference type="PANTHER" id="PTHR32119">
    <property type="entry name" value="OROTIDINE 5'-PHOSPHATE DECARBOXYLASE"/>
    <property type="match status" value="1"/>
</dbReference>
<dbReference type="PANTHER" id="PTHR32119:SF2">
    <property type="entry name" value="OROTIDINE 5'-PHOSPHATE DECARBOXYLASE"/>
    <property type="match status" value="1"/>
</dbReference>
<dbReference type="Pfam" id="PF00215">
    <property type="entry name" value="OMPdecase"/>
    <property type="match status" value="1"/>
</dbReference>
<dbReference type="SMART" id="SM00934">
    <property type="entry name" value="OMPdecase"/>
    <property type="match status" value="1"/>
</dbReference>
<dbReference type="SUPFAM" id="SSF51366">
    <property type="entry name" value="Ribulose-phoshate binding barrel"/>
    <property type="match status" value="1"/>
</dbReference>
<dbReference type="PROSITE" id="PS00156">
    <property type="entry name" value="OMPDECASE"/>
    <property type="match status" value="1"/>
</dbReference>
<accession>A1TZF4</accession>
<gene>
    <name evidence="1" type="primary">pyrF</name>
    <name type="ordered locus">Maqu_1031</name>
</gene>
<keyword id="KW-0210">Decarboxylase</keyword>
<keyword id="KW-0456">Lyase</keyword>
<keyword id="KW-0665">Pyrimidine biosynthesis</keyword>
<organism>
    <name type="scientific">Marinobacter nauticus (strain ATCC 700491 / DSM 11845 / VT8)</name>
    <name type="common">Marinobacter aquaeolei</name>
    <dbReference type="NCBI Taxonomy" id="351348"/>
    <lineage>
        <taxon>Bacteria</taxon>
        <taxon>Pseudomonadati</taxon>
        <taxon>Pseudomonadota</taxon>
        <taxon>Gammaproteobacteria</taxon>
        <taxon>Pseudomonadales</taxon>
        <taxon>Marinobacteraceae</taxon>
        <taxon>Marinobacter</taxon>
    </lineage>
</organism>
<feature type="chain" id="PRO_1000085492" description="Orotidine 5'-phosphate decarboxylase">
    <location>
        <begin position="1"/>
        <end position="236"/>
    </location>
</feature>
<feature type="active site" description="Proton donor" evidence="1">
    <location>
        <position position="65"/>
    </location>
</feature>
<feature type="binding site" evidence="1">
    <location>
        <position position="14"/>
    </location>
    <ligand>
        <name>substrate</name>
    </ligand>
</feature>
<feature type="binding site" evidence="1">
    <location>
        <position position="36"/>
    </location>
    <ligand>
        <name>substrate</name>
    </ligand>
</feature>
<feature type="binding site" evidence="1">
    <location>
        <begin position="63"/>
        <end position="72"/>
    </location>
    <ligand>
        <name>substrate</name>
    </ligand>
</feature>
<feature type="binding site" evidence="1">
    <location>
        <position position="123"/>
    </location>
    <ligand>
        <name>substrate</name>
    </ligand>
</feature>
<feature type="binding site" evidence="1">
    <location>
        <position position="184"/>
    </location>
    <ligand>
        <name>substrate</name>
    </ligand>
</feature>
<feature type="binding site" evidence="1">
    <location>
        <position position="193"/>
    </location>
    <ligand>
        <name>substrate</name>
    </ligand>
</feature>
<feature type="binding site" evidence="1">
    <location>
        <position position="213"/>
    </location>
    <ligand>
        <name>substrate</name>
    </ligand>
</feature>
<feature type="binding site" evidence="1">
    <location>
        <position position="214"/>
    </location>
    <ligand>
        <name>substrate</name>
    </ligand>
</feature>
<reference key="1">
    <citation type="journal article" date="2011" name="Appl. Environ. Microbiol.">
        <title>Genomic potential of Marinobacter aquaeolei, a biogeochemical 'opportunitroph'.</title>
        <authorList>
            <person name="Singer E."/>
            <person name="Webb E.A."/>
            <person name="Nelson W.C."/>
            <person name="Heidelberg J.F."/>
            <person name="Ivanova N."/>
            <person name="Pati A."/>
            <person name="Edwards K.J."/>
        </authorList>
    </citation>
    <scope>NUCLEOTIDE SEQUENCE [LARGE SCALE GENOMIC DNA]</scope>
    <source>
        <strain>ATCC 700491 / DSM 11845 / VT8</strain>
    </source>
</reference>
<comment type="function">
    <text evidence="1">Catalyzes the decarboxylation of orotidine 5'-monophosphate (OMP) to uridine 5'-monophosphate (UMP).</text>
</comment>
<comment type="catalytic activity">
    <reaction evidence="1">
        <text>orotidine 5'-phosphate + H(+) = UMP + CO2</text>
        <dbReference type="Rhea" id="RHEA:11596"/>
        <dbReference type="ChEBI" id="CHEBI:15378"/>
        <dbReference type="ChEBI" id="CHEBI:16526"/>
        <dbReference type="ChEBI" id="CHEBI:57538"/>
        <dbReference type="ChEBI" id="CHEBI:57865"/>
        <dbReference type="EC" id="4.1.1.23"/>
    </reaction>
</comment>
<comment type="pathway">
    <text evidence="1">Pyrimidine metabolism; UMP biosynthesis via de novo pathway; UMP from orotate: step 2/2.</text>
</comment>
<comment type="subunit">
    <text evidence="1">Homodimer.</text>
</comment>
<comment type="similarity">
    <text evidence="1">Belongs to the OMP decarboxylase family. Type 1 subfamily.</text>
</comment>
<evidence type="ECO:0000255" key="1">
    <source>
        <dbReference type="HAMAP-Rule" id="MF_01200"/>
    </source>
</evidence>
<name>PYRF_MARN8</name>
<protein>
    <recommendedName>
        <fullName evidence="1">Orotidine 5'-phosphate decarboxylase</fullName>
        <ecNumber evidence="1">4.1.1.23</ecNumber>
    </recommendedName>
    <alternativeName>
        <fullName evidence="1">OMP decarboxylase</fullName>
        <shortName evidence="1">OMPDCase</shortName>
        <shortName evidence="1">OMPdecase</shortName>
    </alternativeName>
</protein>
<sequence>MQNLNDPKIIVALDFPSQNPALALADQLDPAKCRLKVGKELFTRSGPDLVKALQSRGFDIFLDLKFHDIPNTTSAAVAAAAELGVWMVNVHASGGEKMMVACRERLESFGNDRPLLIAVTVLTSMSDEDLAGIGIASSAEAHVSRLATLTKNSGLDGVVCSAQEAPRLKAEQGSDFQLITPGIRPLTADKGDQQRIMTPTDALKAGSDYLVIGRPITQAPDPLAALESIHAEVVAV</sequence>